<dbReference type="EMBL" id="AE014075">
    <property type="protein sequence ID" value="AAN81134.1"/>
    <property type="molecule type" value="Genomic_DNA"/>
</dbReference>
<dbReference type="RefSeq" id="WP_000383096.1">
    <property type="nucleotide sequence ID" value="NZ_CP051263.1"/>
</dbReference>
<dbReference type="SMR" id="P64537"/>
<dbReference type="STRING" id="199310.c2678"/>
<dbReference type="KEGG" id="ecc:c2678"/>
<dbReference type="eggNOG" id="ENOG50334PZ">
    <property type="taxonomic scope" value="Bacteria"/>
</dbReference>
<dbReference type="HOGENOM" id="CLU_196596_0_0_6"/>
<dbReference type="BioCyc" id="ECOL199310:C2678-MONOMER"/>
<dbReference type="Proteomes" id="UP000001410">
    <property type="component" value="Chromosome"/>
</dbReference>
<dbReference type="GO" id="GO:0016020">
    <property type="term" value="C:membrane"/>
    <property type="evidence" value="ECO:0007669"/>
    <property type="project" value="UniProtKB-SubCell"/>
</dbReference>
<dbReference type="InterPro" id="IPR020155">
    <property type="entry name" value="Uncharacterised_YeiS"/>
</dbReference>
<dbReference type="Pfam" id="PF10808">
    <property type="entry name" value="DUF2542"/>
    <property type="match status" value="1"/>
</dbReference>
<gene>
    <name type="primary">yeiS</name>
    <name type="ordered locus">c2678</name>
</gene>
<evidence type="ECO:0000255" key="1"/>
<evidence type="ECO:0000305" key="2"/>
<proteinExistence type="predicted"/>
<keyword id="KW-0472">Membrane</keyword>
<keyword id="KW-1185">Reference proteome</keyword>
<keyword id="KW-0812">Transmembrane</keyword>
<keyword id="KW-1133">Transmembrane helix</keyword>
<organism>
    <name type="scientific">Escherichia coli O6:H1 (strain CFT073 / ATCC 700928 / UPEC)</name>
    <dbReference type="NCBI Taxonomy" id="199310"/>
    <lineage>
        <taxon>Bacteria</taxon>
        <taxon>Pseudomonadati</taxon>
        <taxon>Pseudomonadota</taxon>
        <taxon>Gammaproteobacteria</taxon>
        <taxon>Enterobacterales</taxon>
        <taxon>Enterobacteriaceae</taxon>
        <taxon>Escherichia</taxon>
    </lineage>
</organism>
<comment type="subcellular location">
    <subcellularLocation>
        <location evidence="2">Membrane</location>
        <topology evidence="2">Single-pass membrane protein</topology>
    </subcellularLocation>
</comment>
<feature type="chain" id="PRO_0000169154" description="Uncharacterized protein YeiS">
    <location>
        <begin position="1"/>
        <end position="79"/>
    </location>
</feature>
<feature type="transmembrane region" description="Helical" evidence="1">
    <location>
        <begin position="53"/>
        <end position="73"/>
    </location>
</feature>
<protein>
    <recommendedName>
        <fullName>Uncharacterized protein YeiS</fullName>
    </recommendedName>
</protein>
<reference key="1">
    <citation type="journal article" date="2002" name="Proc. Natl. Acad. Sci. U.S.A.">
        <title>Extensive mosaic structure revealed by the complete genome sequence of uropathogenic Escherichia coli.</title>
        <authorList>
            <person name="Welch R.A."/>
            <person name="Burland V."/>
            <person name="Plunkett G. III"/>
            <person name="Redford P."/>
            <person name="Roesch P."/>
            <person name="Rasko D."/>
            <person name="Buckles E.L."/>
            <person name="Liou S.-R."/>
            <person name="Boutin A."/>
            <person name="Hackett J."/>
            <person name="Stroud D."/>
            <person name="Mayhew G.F."/>
            <person name="Rose D.J."/>
            <person name="Zhou S."/>
            <person name="Schwartz D.C."/>
            <person name="Perna N.T."/>
            <person name="Mobley H.L.T."/>
            <person name="Donnenberg M.S."/>
            <person name="Blattner F.R."/>
        </authorList>
    </citation>
    <scope>NUCLEOTIDE SEQUENCE [LARGE SCALE GENOMIC DNA]</scope>
    <source>
        <strain>CFT073 / ATCC 700928 / UPEC</strain>
    </source>
</reference>
<sequence length="79" mass="9264">MDVQQFFVVAVFFLIPIFCFREAWKGWRAGAIDKRVKNAPEPVYVWRAKNPGLFFAYMVAYIGFGILSIGMIVYLIFYR</sequence>
<accession>P64537</accession>
<accession>P76439</accession>
<name>YEIS_ECOL6</name>